<reference key="1">
    <citation type="journal article" date="1999" name="Biochim. Biophys. Acta">
        <title>Isolation and characterization of a mouse SRY-related cDNA, mSox7.</title>
        <authorList>
            <person name="Taniguchi K."/>
            <person name="Hiraoka Y."/>
            <person name="Ogawa M."/>
            <person name="Sakai Y."/>
            <person name="Kido S."/>
            <person name="Aiso S."/>
        </authorList>
    </citation>
    <scope>NUCLEOTIDE SEQUENCE [MRNA]</scope>
    <scope>FUNCTION</scope>
    <scope>DNA-BINDING</scope>
    <scope>TISSUE SPECIFICITY</scope>
</reference>
<reference key="2">
    <citation type="journal article" date="1992" name="Nucleic Acids Res.">
        <title>A conserved family of genes related to the testis determining gene, SRY.</title>
        <authorList>
            <person name="Denny P."/>
            <person name="Swift S."/>
            <person name="Brand N."/>
            <person name="Dabhade N."/>
            <person name="Barton P."/>
            <person name="Ashworth A."/>
        </authorList>
    </citation>
    <scope>NUCLEOTIDE SEQUENCE [MRNA] OF 56-109</scope>
    <source>
        <strain>Parkes</strain>
        <tissue>Brain</tissue>
        <tissue>Testis</tissue>
    </source>
</reference>
<reference key="3">
    <citation type="journal article" date="2001" name="Nucleic Acids Res.">
        <title>SOX7 transcription factor: sequence, chromosomal localisation, expression, transactivation and interference with Wnt signalling.</title>
        <authorList>
            <person name="Takash W."/>
            <person name="Canizares J."/>
            <person name="Bonneaud N."/>
            <person name="Poulat F."/>
            <person name="Mattei M.-G."/>
            <person name="Jay P."/>
            <person name="Berta P."/>
        </authorList>
    </citation>
    <scope>FUNCTION</scope>
    <scope>SUBCELLULAR LOCATION</scope>
    <scope>TISSUE SPECIFICITY</scope>
    <scope>DEVELOPMENTAL STAGE</scope>
    <scope>MUTAGENESIS OF 323-GLU--LEU-328</scope>
</reference>
<reference key="4">
    <citation type="journal article" date="2004" name="J. Biol. Chem.">
        <title>SOX7 and GATA-4 are competitive activators of Fgf-3 transcription.</title>
        <authorList>
            <person name="Murakami A."/>
            <person name="Shen H."/>
            <person name="Ishida S."/>
            <person name="Dickson C."/>
        </authorList>
    </citation>
    <scope>FUNCTION IN FGF3 PROMOTER ACTIVATION</scope>
</reference>
<reference key="5">
    <citation type="journal article" date="2009" name="Blood">
        <title>Sox7-sustained expression alters the balance between proliferation and differentiation of hematopoietic progenitors at the onset of blood specification.</title>
        <authorList>
            <person name="Gandillet A."/>
            <person name="Serrano A.G."/>
            <person name="Pearson S."/>
            <person name="Lie-A-Ling M."/>
            <person name="Lacaud G."/>
            <person name="Kouskoff V."/>
        </authorList>
    </citation>
    <scope>FUNCTION IN HEMOPOIETIC DEVELOPMENT</scope>
    <scope>DEVELOPMENTAL STAGE</scope>
</reference>
<reference key="6">
    <citation type="journal article" date="2009" name="Stem Cells">
        <title>SOX15 and SOX7 differentially regulate the myogenic program in P19 cells.</title>
        <authorList>
            <person name="Savage J."/>
            <person name="Conley A.J."/>
            <person name="Blais A."/>
            <person name="Skerjanc I.S."/>
        </authorList>
    </citation>
    <scope>FUNCTION IN MYOGENIC DIFFERENTIATION</scope>
    <scope>DEVELOPMENTAL STAGE</scope>
</reference>
<reference key="7">
    <citation type="journal article" date="2012" name="Development">
        <title>SOX7 regulates the expression of VE-cadherin in the haemogenic endothelium at the onset of haematopoietic development.</title>
        <authorList>
            <person name="Costa G."/>
            <person name="Mazan A."/>
            <person name="Gandillet A."/>
            <person name="Pearson S."/>
            <person name="Lacaud G."/>
            <person name="Kouskoff V."/>
        </authorList>
    </citation>
    <scope>FUNCTION IN HEMOPOIETIC DEVELOPMENT</scope>
    <scope>INDUCTION</scope>
    <scope>DEVELOPMENTAL STAGE</scope>
</reference>
<name>SOX7_MOUSE</name>
<organism>
    <name type="scientific">Mus musculus</name>
    <name type="common">Mouse</name>
    <dbReference type="NCBI Taxonomy" id="10090"/>
    <lineage>
        <taxon>Eukaryota</taxon>
        <taxon>Metazoa</taxon>
        <taxon>Chordata</taxon>
        <taxon>Craniata</taxon>
        <taxon>Vertebrata</taxon>
        <taxon>Euteleostomi</taxon>
        <taxon>Mammalia</taxon>
        <taxon>Eutheria</taxon>
        <taxon>Euarchontoglires</taxon>
        <taxon>Glires</taxon>
        <taxon>Rodentia</taxon>
        <taxon>Myomorpha</taxon>
        <taxon>Muroidea</taxon>
        <taxon>Muridae</taxon>
        <taxon>Murinae</taxon>
        <taxon>Mus</taxon>
        <taxon>Mus</taxon>
    </lineage>
</organism>
<proteinExistence type="evidence at protein level"/>
<gene>
    <name type="primary">Sox7</name>
    <name type="synonym">Sox-7</name>
</gene>
<evidence type="ECO:0000250" key="1"/>
<evidence type="ECO:0000255" key="2">
    <source>
        <dbReference type="PROSITE-ProRule" id="PRU00267"/>
    </source>
</evidence>
<evidence type="ECO:0000255" key="3">
    <source>
        <dbReference type="PROSITE-ProRule" id="PRU00849"/>
    </source>
</evidence>
<evidence type="ECO:0000256" key="4">
    <source>
        <dbReference type="SAM" id="MobiDB-lite"/>
    </source>
</evidence>
<evidence type="ECO:0000269" key="5">
    <source>
    </source>
</evidence>
<evidence type="ECO:0000269" key="6">
    <source>
    </source>
</evidence>
<evidence type="ECO:0000269" key="7">
    <source>
    </source>
</evidence>
<evidence type="ECO:0000269" key="8">
    <source>
    </source>
</evidence>
<evidence type="ECO:0000269" key="9">
    <source>
    </source>
</evidence>
<evidence type="ECO:0000269" key="10">
    <source>
    </source>
</evidence>
<keyword id="KW-0010">Activator</keyword>
<keyword id="KW-0963">Cytoplasm</keyword>
<keyword id="KW-0238">DNA-binding</keyword>
<keyword id="KW-0539">Nucleus</keyword>
<keyword id="KW-1185">Reference proteome</keyword>
<keyword id="KW-0804">Transcription</keyword>
<keyword id="KW-0805">Transcription regulation</keyword>
<sequence>MASLLGAYPWTEGLECPALEAELSDGLSPPAVPRPSGDKSSESRIRRPMNAFMVWAKDERKRLAVQNPDLHNAELSKMLGKSWKALTLSQKRPYVDEAERLRLQHMQDYPNYKYRPRRKKQGKRLCKRVDPGFLLSSLSRDQNTLPEKNGIGRGEKEDRGEYSPGATLPGLHSCYREGAAAAPGSVDTYPYGLPTPPEMSPLDALEPEQTFFSSSCQEEHGHPHHLPHLPGPPYSPEFTPSPLHCSHPLGSLALGQSPGVSMMSSVSGCPPSPAYYSHATYHPLHPNLQAHLGQLSPPPEHPGFDTLDQLSQVELLGDMDRNEFDQYLNTPGHPDSAAGVGTLTGHVPLSQGTPTGPTETSLISVLADATATYYNSYSVS</sequence>
<dbReference type="EMBL" id="AB023419">
    <property type="protein sequence ID" value="BAA78765.1"/>
    <property type="molecule type" value="mRNA"/>
</dbReference>
<dbReference type="EMBL" id="X65660">
    <property type="protein sequence ID" value="CAA46611.1"/>
    <property type="molecule type" value="mRNA"/>
</dbReference>
<dbReference type="CCDS" id="CCDS27206.1"/>
<dbReference type="PIR" id="S22945">
    <property type="entry name" value="S22945"/>
</dbReference>
<dbReference type="RefSeq" id="NP_035576.1">
    <property type="nucleotide sequence ID" value="NM_011446.1"/>
</dbReference>
<dbReference type="SMR" id="P40646"/>
<dbReference type="FunCoup" id="P40646">
    <property type="interactions" value="1366"/>
</dbReference>
<dbReference type="STRING" id="10090.ENSMUSP00000078597"/>
<dbReference type="GlyGen" id="P40646">
    <property type="glycosylation" value="1 site"/>
</dbReference>
<dbReference type="PhosphoSitePlus" id="P40646"/>
<dbReference type="PaxDb" id="10090-ENSMUSP00000078597"/>
<dbReference type="ProteomicsDB" id="261616"/>
<dbReference type="Antibodypedia" id="1821">
    <property type="antibodies" value="206 antibodies from 30 providers"/>
</dbReference>
<dbReference type="DNASU" id="20680"/>
<dbReference type="Ensembl" id="ENSMUST00000079652.7">
    <property type="protein sequence ID" value="ENSMUSP00000078597.6"/>
    <property type="gene ID" value="ENSMUSG00000063060.7"/>
</dbReference>
<dbReference type="GeneID" id="20680"/>
<dbReference type="KEGG" id="mmu:20680"/>
<dbReference type="UCSC" id="uc007uhy.1">
    <property type="organism name" value="mouse"/>
</dbReference>
<dbReference type="AGR" id="MGI:98369"/>
<dbReference type="CTD" id="83595"/>
<dbReference type="MGI" id="MGI:98369">
    <property type="gene designation" value="Sox7"/>
</dbReference>
<dbReference type="VEuPathDB" id="HostDB:ENSMUSG00000063060"/>
<dbReference type="eggNOG" id="KOG0527">
    <property type="taxonomic scope" value="Eukaryota"/>
</dbReference>
<dbReference type="GeneTree" id="ENSGT00940000161092"/>
<dbReference type="HOGENOM" id="CLU_044994_0_0_1"/>
<dbReference type="InParanoid" id="P40646"/>
<dbReference type="OMA" id="CQEEHAH"/>
<dbReference type="OrthoDB" id="6247875at2759"/>
<dbReference type="PhylomeDB" id="P40646"/>
<dbReference type="Reactome" id="R-MMU-3769402">
    <property type="pathway name" value="Deactivation of the beta-catenin transactivating complex"/>
</dbReference>
<dbReference type="BioGRID-ORCS" id="20680">
    <property type="hits" value="0 hits in 76 CRISPR screens"/>
</dbReference>
<dbReference type="PRO" id="PR:P40646"/>
<dbReference type="Proteomes" id="UP000000589">
    <property type="component" value="Chromosome 14"/>
</dbReference>
<dbReference type="RNAct" id="P40646">
    <property type="molecule type" value="protein"/>
</dbReference>
<dbReference type="Bgee" id="ENSMUSG00000063060">
    <property type="expression patterns" value="Expressed in kidney vasculature and 191 other cell types or tissues"/>
</dbReference>
<dbReference type="ExpressionAtlas" id="P40646">
    <property type="expression patterns" value="baseline and differential"/>
</dbReference>
<dbReference type="GO" id="GO:0005737">
    <property type="term" value="C:cytoplasm"/>
    <property type="evidence" value="ECO:0000314"/>
    <property type="project" value="MGI"/>
</dbReference>
<dbReference type="GO" id="GO:0005634">
    <property type="term" value="C:nucleus"/>
    <property type="evidence" value="ECO:0000314"/>
    <property type="project" value="MGI"/>
</dbReference>
<dbReference type="GO" id="GO:0003700">
    <property type="term" value="F:DNA-binding transcription factor activity"/>
    <property type="evidence" value="ECO:0000314"/>
    <property type="project" value="MGI"/>
</dbReference>
<dbReference type="GO" id="GO:0000981">
    <property type="term" value="F:DNA-binding transcription factor activity, RNA polymerase II-specific"/>
    <property type="evidence" value="ECO:0000314"/>
    <property type="project" value="MGI"/>
</dbReference>
<dbReference type="GO" id="GO:0043565">
    <property type="term" value="F:sequence-specific DNA binding"/>
    <property type="evidence" value="ECO:0000314"/>
    <property type="project" value="MGI"/>
</dbReference>
<dbReference type="GO" id="GO:0000976">
    <property type="term" value="F:transcription cis-regulatory region binding"/>
    <property type="evidence" value="ECO:0000314"/>
    <property type="project" value="BHF-UCL"/>
</dbReference>
<dbReference type="GO" id="GO:0001706">
    <property type="term" value="P:endoderm formation"/>
    <property type="evidence" value="ECO:0007669"/>
    <property type="project" value="Ensembl"/>
</dbReference>
<dbReference type="GO" id="GO:0045892">
    <property type="term" value="P:negative regulation of DNA-templated transcription"/>
    <property type="evidence" value="ECO:0007669"/>
    <property type="project" value="Ensembl"/>
</dbReference>
<dbReference type="GO" id="GO:0045893">
    <property type="term" value="P:positive regulation of DNA-templated transcription"/>
    <property type="evidence" value="ECO:0000314"/>
    <property type="project" value="MGI"/>
</dbReference>
<dbReference type="GO" id="GO:0006357">
    <property type="term" value="P:regulation of transcription by RNA polymerase II"/>
    <property type="evidence" value="ECO:0000314"/>
    <property type="project" value="MGI"/>
</dbReference>
<dbReference type="CDD" id="cd22046">
    <property type="entry name" value="HMG-box_SoxF_SOX7"/>
    <property type="match status" value="1"/>
</dbReference>
<dbReference type="FunFam" id="1.10.30.10:FF:000008">
    <property type="entry name" value="transcription factor SOX-7"/>
    <property type="match status" value="1"/>
</dbReference>
<dbReference type="Gene3D" id="1.10.30.10">
    <property type="entry name" value="High mobility group box domain"/>
    <property type="match status" value="1"/>
</dbReference>
<dbReference type="InterPro" id="IPR009071">
    <property type="entry name" value="HMG_box_dom"/>
</dbReference>
<dbReference type="InterPro" id="IPR036910">
    <property type="entry name" value="HMG_box_dom_sf"/>
</dbReference>
<dbReference type="InterPro" id="IPR033392">
    <property type="entry name" value="Sox7/17/18_central"/>
</dbReference>
<dbReference type="InterPro" id="IPR021934">
    <property type="entry name" value="Sox_C"/>
</dbReference>
<dbReference type="InterPro" id="IPR050140">
    <property type="entry name" value="SRY-related_HMG-box_TF-like"/>
</dbReference>
<dbReference type="PANTHER" id="PTHR10270">
    <property type="entry name" value="SOX TRANSCRIPTION FACTOR"/>
    <property type="match status" value="1"/>
</dbReference>
<dbReference type="PANTHER" id="PTHR10270:SF210">
    <property type="entry name" value="TRANSCRIPTION FACTOR SOX-7"/>
    <property type="match status" value="1"/>
</dbReference>
<dbReference type="Pfam" id="PF00505">
    <property type="entry name" value="HMG_box"/>
    <property type="match status" value="1"/>
</dbReference>
<dbReference type="Pfam" id="PF12067">
    <property type="entry name" value="Sox17_18_mid"/>
    <property type="match status" value="1"/>
</dbReference>
<dbReference type="SMART" id="SM00398">
    <property type="entry name" value="HMG"/>
    <property type="match status" value="1"/>
</dbReference>
<dbReference type="SUPFAM" id="SSF47095">
    <property type="entry name" value="HMG-box"/>
    <property type="match status" value="1"/>
</dbReference>
<dbReference type="PROSITE" id="PS50118">
    <property type="entry name" value="HMG_BOX_2"/>
    <property type="match status" value="1"/>
</dbReference>
<dbReference type="PROSITE" id="PS51516">
    <property type="entry name" value="SOX_C"/>
    <property type="match status" value="1"/>
</dbReference>
<protein>
    <recommendedName>
        <fullName>Transcription factor SOX-7</fullName>
        <shortName>mSOX7</shortName>
    </recommendedName>
</protein>
<accession>P40646</accession>
<accession>Q9R1T6</accession>
<feature type="chain" id="PRO_0000048732" description="Transcription factor SOX-7">
    <location>
        <begin position="1"/>
        <end position="380"/>
    </location>
</feature>
<feature type="domain" description="Sox C-terminal" evidence="3">
    <location>
        <begin position="260"/>
        <end position="380"/>
    </location>
</feature>
<feature type="DNA-binding region" description="HMG box" evidence="2">
    <location>
        <begin position="45"/>
        <end position="113"/>
    </location>
</feature>
<feature type="region of interest" description="Disordered" evidence="4">
    <location>
        <begin position="24"/>
        <end position="43"/>
    </location>
</feature>
<feature type="region of interest" description="Disordered" evidence="4">
    <location>
        <begin position="139"/>
        <end position="167"/>
    </location>
</feature>
<feature type="region of interest" description="Required for beta-catenin-binding">
    <location>
        <begin position="323"/>
        <end position="328"/>
    </location>
</feature>
<feature type="mutagenesis site" description="Loss of beta-catenin-binding." evidence="6">
    <location>
        <begin position="323"/>
        <end position="328"/>
    </location>
</feature>
<comment type="function">
    <text evidence="5 6 7 8 9 10">Binds to and activates the CDH5 promoter, hence plays a role in the transcriptional regulation of genes expressed in the hemogenic endothelium and blocks further differentiation into blood precursors. May be required for the survival of both hematopoietic and endothelial precursors during specification. May play a role in skeletal myogenesis and up-regulate the expression of muscle markers, such as PAX3/PAX7 and Meox1. Competes with GATA4 for binding and activation of the FGF3 promoter. Represses Wnt/beta-catenin-stimulated transcription. Probably acts by targeting CTNNB1 to proteasomal degradation. Binds the DNA sequence 5'-AACAAT-3'.</text>
</comment>
<comment type="subunit">
    <text evidence="1">Interacts with CTNNB1/beta-catenin; this interaction may lead to the proteasomal degradation of active CTNNB1 and thus inhibition of Wnt/beta-catenin-stimulated transcription.</text>
</comment>
<comment type="subcellular location">
    <subcellularLocation>
        <location evidence="2 6">Nucleus</location>
    </subcellularLocation>
    <subcellularLocation>
        <location evidence="6">Cytoplasm</location>
    </subcellularLocation>
</comment>
<comment type="tissue specificity">
    <text evidence="5 6">Predominantly expressed in ovary, lung and heart. In the ovary, restricted to oocytes (at protein level). Present both in mesenchymal and epithelial cells in some adult tissues, including ear.</text>
</comment>
<comment type="developmental stage">
    <text evidence="6 8 9 10">Expressed at least from 7.6 until 17.5 dpc. At 7.5 dpc, expressed in the yolk sac, as well as in the parietal and visceral endoderm and the embryonic mesoderm. At 8 dpc, expressed in somites and head region. At 9.5 dpc, expressed throughout vasculature. At 11.5 dpc, primarily expressed in the intersomitic vasculature. At 17.5 dpc, predominant expression in heart and lung. At that stage, also expressed in brain, cochlea, tongue, cartilage, lung, liver and vertebrae. During hemangioblast differentiation, transiently expressed in hemogenic endothelium cells and down-regulated in nascent blood precursors. May be expressed during the precursor stage of myogenic differentiation.</text>
</comment>
<comment type="induction">
    <text evidence="10">Up-regulated by VEGFA.</text>
</comment>